<feature type="chain" id="PRO_0000195852" description="Glutamine--tRNA ligase">
    <location>
        <begin position="1"/>
        <end position="556"/>
    </location>
</feature>
<feature type="short sequence motif" description="'HIGH' region" evidence="1">
    <location>
        <begin position="34"/>
        <end position="44"/>
    </location>
</feature>
<feature type="short sequence motif" description="'KMSKS' region" evidence="1">
    <location>
        <begin position="268"/>
        <end position="272"/>
    </location>
</feature>
<feature type="binding site" evidence="1">
    <location>
        <begin position="35"/>
        <end position="37"/>
    </location>
    <ligand>
        <name>ATP</name>
        <dbReference type="ChEBI" id="CHEBI:30616"/>
    </ligand>
</feature>
<feature type="binding site" evidence="1">
    <location>
        <begin position="41"/>
        <end position="47"/>
    </location>
    <ligand>
        <name>ATP</name>
        <dbReference type="ChEBI" id="CHEBI:30616"/>
    </ligand>
</feature>
<feature type="binding site" evidence="1">
    <location>
        <position position="67"/>
    </location>
    <ligand>
        <name>L-glutamine</name>
        <dbReference type="ChEBI" id="CHEBI:58359"/>
    </ligand>
</feature>
<feature type="binding site" evidence="1">
    <location>
        <position position="212"/>
    </location>
    <ligand>
        <name>L-glutamine</name>
        <dbReference type="ChEBI" id="CHEBI:58359"/>
    </ligand>
</feature>
<feature type="binding site" evidence="1">
    <location>
        <position position="231"/>
    </location>
    <ligand>
        <name>ATP</name>
        <dbReference type="ChEBI" id="CHEBI:30616"/>
    </ligand>
</feature>
<feature type="binding site" evidence="1">
    <location>
        <begin position="261"/>
        <end position="262"/>
    </location>
    <ligand>
        <name>ATP</name>
        <dbReference type="ChEBI" id="CHEBI:30616"/>
    </ligand>
</feature>
<feature type="binding site" evidence="1">
    <location>
        <begin position="269"/>
        <end position="271"/>
    </location>
    <ligand>
        <name>ATP</name>
        <dbReference type="ChEBI" id="CHEBI:30616"/>
    </ligand>
</feature>
<proteinExistence type="inferred from homology"/>
<protein>
    <recommendedName>
        <fullName evidence="1">Glutamine--tRNA ligase</fullName>
        <ecNumber evidence="1">6.1.1.18</ecNumber>
    </recommendedName>
    <alternativeName>
        <fullName evidence="1">Glutaminyl-tRNA synthetase</fullName>
        <shortName evidence="1">GlnRS</shortName>
    </alternativeName>
</protein>
<reference key="1">
    <citation type="journal article" date="2000" name="Nature">
        <title>DNA sequence of both chromosomes of the cholera pathogen Vibrio cholerae.</title>
        <authorList>
            <person name="Heidelberg J.F."/>
            <person name="Eisen J.A."/>
            <person name="Nelson W.C."/>
            <person name="Clayton R.A."/>
            <person name="Gwinn M.L."/>
            <person name="Dodson R.J."/>
            <person name="Haft D.H."/>
            <person name="Hickey E.K."/>
            <person name="Peterson J.D."/>
            <person name="Umayam L.A."/>
            <person name="Gill S.R."/>
            <person name="Nelson K.E."/>
            <person name="Read T.D."/>
            <person name="Tettelin H."/>
            <person name="Richardson D.L."/>
            <person name="Ermolaeva M.D."/>
            <person name="Vamathevan J.J."/>
            <person name="Bass S."/>
            <person name="Qin H."/>
            <person name="Dragoi I."/>
            <person name="Sellers P."/>
            <person name="McDonald L.A."/>
            <person name="Utterback T.R."/>
            <person name="Fleischmann R.D."/>
            <person name="Nierman W.C."/>
            <person name="White O."/>
            <person name="Salzberg S.L."/>
            <person name="Smith H.O."/>
            <person name="Colwell R.R."/>
            <person name="Mekalanos J.J."/>
            <person name="Venter J.C."/>
            <person name="Fraser C.M."/>
        </authorList>
    </citation>
    <scope>NUCLEOTIDE SEQUENCE [LARGE SCALE GENOMIC DNA]</scope>
    <source>
        <strain>ATCC 39315 / El Tor Inaba N16961</strain>
    </source>
</reference>
<dbReference type="EC" id="6.1.1.18" evidence="1"/>
<dbReference type="EMBL" id="AE003852">
    <property type="protein sequence ID" value="AAF94158.1"/>
    <property type="molecule type" value="Genomic_DNA"/>
</dbReference>
<dbReference type="PIR" id="H82254">
    <property type="entry name" value="H82254"/>
</dbReference>
<dbReference type="PIR" id="PC4398">
    <property type="entry name" value="PC4398"/>
</dbReference>
<dbReference type="RefSeq" id="NP_230643.1">
    <property type="nucleotide sequence ID" value="NC_002505.1"/>
</dbReference>
<dbReference type="RefSeq" id="WP_001287115.1">
    <property type="nucleotide sequence ID" value="NZ_LT906614.1"/>
</dbReference>
<dbReference type="SMR" id="Q9KTA6"/>
<dbReference type="STRING" id="243277.VC_0997"/>
<dbReference type="DNASU" id="2614250"/>
<dbReference type="EnsemblBacteria" id="AAF94158">
    <property type="protein sequence ID" value="AAF94158"/>
    <property type="gene ID" value="VC_0997"/>
</dbReference>
<dbReference type="GeneID" id="89514898"/>
<dbReference type="KEGG" id="vch:VC_0997"/>
<dbReference type="PATRIC" id="fig|243277.26.peg.950"/>
<dbReference type="eggNOG" id="COG0008">
    <property type="taxonomic scope" value="Bacteria"/>
</dbReference>
<dbReference type="HOGENOM" id="CLU_001882_2_3_6"/>
<dbReference type="Proteomes" id="UP000000584">
    <property type="component" value="Chromosome 1"/>
</dbReference>
<dbReference type="GO" id="GO:0005829">
    <property type="term" value="C:cytosol"/>
    <property type="evidence" value="ECO:0000318"/>
    <property type="project" value="GO_Central"/>
</dbReference>
<dbReference type="GO" id="GO:0005524">
    <property type="term" value="F:ATP binding"/>
    <property type="evidence" value="ECO:0007669"/>
    <property type="project" value="UniProtKB-UniRule"/>
</dbReference>
<dbReference type="GO" id="GO:0004819">
    <property type="term" value="F:glutamine-tRNA ligase activity"/>
    <property type="evidence" value="ECO:0000318"/>
    <property type="project" value="GO_Central"/>
</dbReference>
<dbReference type="GO" id="GO:0006425">
    <property type="term" value="P:glutaminyl-tRNA aminoacylation"/>
    <property type="evidence" value="ECO:0000318"/>
    <property type="project" value="GO_Central"/>
</dbReference>
<dbReference type="GO" id="GO:0006424">
    <property type="term" value="P:glutamyl-tRNA aminoacylation"/>
    <property type="evidence" value="ECO:0007669"/>
    <property type="project" value="UniProtKB-UniRule"/>
</dbReference>
<dbReference type="CDD" id="cd00807">
    <property type="entry name" value="GlnRS_core"/>
    <property type="match status" value="1"/>
</dbReference>
<dbReference type="FunFam" id="1.10.1160.10:FF:000001">
    <property type="entry name" value="Glutamine--tRNA ligase"/>
    <property type="match status" value="1"/>
</dbReference>
<dbReference type="FunFam" id="2.40.240.10:FF:000001">
    <property type="entry name" value="Glutamine--tRNA ligase"/>
    <property type="match status" value="1"/>
</dbReference>
<dbReference type="FunFam" id="2.40.240.10:FF:000003">
    <property type="entry name" value="Glutamine--tRNA ligase"/>
    <property type="match status" value="1"/>
</dbReference>
<dbReference type="FunFam" id="3.90.800.10:FF:000001">
    <property type="entry name" value="Glutamine--tRNA ligase"/>
    <property type="match status" value="1"/>
</dbReference>
<dbReference type="FunFam" id="3.40.50.620:FF:000037">
    <property type="entry name" value="Glutamine--tRNA ligase cytoplasmic"/>
    <property type="match status" value="1"/>
</dbReference>
<dbReference type="Gene3D" id="1.10.1160.10">
    <property type="entry name" value="Glutamyl-trna Synthetase, Domain 2"/>
    <property type="match status" value="1"/>
</dbReference>
<dbReference type="Gene3D" id="3.90.800.10">
    <property type="entry name" value="Glutamyl-tRNA Synthetase, Domain 3"/>
    <property type="match status" value="1"/>
</dbReference>
<dbReference type="Gene3D" id="3.40.50.620">
    <property type="entry name" value="HUPs"/>
    <property type="match status" value="1"/>
</dbReference>
<dbReference type="Gene3D" id="2.40.240.10">
    <property type="entry name" value="Ribosomal Protein L25, Chain P"/>
    <property type="match status" value="2"/>
</dbReference>
<dbReference type="HAMAP" id="MF_00126">
    <property type="entry name" value="Gln_tRNA_synth"/>
    <property type="match status" value="1"/>
</dbReference>
<dbReference type="InterPro" id="IPR001412">
    <property type="entry name" value="aa-tRNA-synth_I_CS"/>
</dbReference>
<dbReference type="InterPro" id="IPR004514">
    <property type="entry name" value="Gln-tRNA-synth"/>
</dbReference>
<dbReference type="InterPro" id="IPR050132">
    <property type="entry name" value="Gln/Glu-tRNA_Ligase"/>
</dbReference>
<dbReference type="InterPro" id="IPR022861">
    <property type="entry name" value="Gln_tRNA_ligase_bac"/>
</dbReference>
<dbReference type="InterPro" id="IPR000924">
    <property type="entry name" value="Glu/Gln-tRNA-synth"/>
</dbReference>
<dbReference type="InterPro" id="IPR020058">
    <property type="entry name" value="Glu/Gln-tRNA-synth_Ib_cat-dom"/>
</dbReference>
<dbReference type="InterPro" id="IPR020059">
    <property type="entry name" value="Glu/Gln-tRNA-synth_Ib_codon-bd"/>
</dbReference>
<dbReference type="InterPro" id="IPR020061">
    <property type="entry name" value="Glu_tRNA_lig_a-bdl"/>
</dbReference>
<dbReference type="InterPro" id="IPR020056">
    <property type="entry name" value="Rbsml_bL25/Gln-tRNA_synth_N"/>
</dbReference>
<dbReference type="InterPro" id="IPR011035">
    <property type="entry name" value="Ribosomal_bL25/Gln-tRNA_synth"/>
</dbReference>
<dbReference type="InterPro" id="IPR014729">
    <property type="entry name" value="Rossmann-like_a/b/a_fold"/>
</dbReference>
<dbReference type="InterPro" id="IPR049437">
    <property type="entry name" value="tRNA-synt_1c_C2"/>
</dbReference>
<dbReference type="NCBIfam" id="TIGR00440">
    <property type="entry name" value="glnS"/>
    <property type="match status" value="1"/>
</dbReference>
<dbReference type="NCBIfam" id="NF011291">
    <property type="entry name" value="PRK14703.1"/>
    <property type="match status" value="1"/>
</dbReference>
<dbReference type="PANTHER" id="PTHR43097:SF5">
    <property type="entry name" value="GLUTAMATE--TRNA LIGASE"/>
    <property type="match status" value="1"/>
</dbReference>
<dbReference type="PANTHER" id="PTHR43097">
    <property type="entry name" value="GLUTAMINE-TRNA LIGASE"/>
    <property type="match status" value="1"/>
</dbReference>
<dbReference type="Pfam" id="PF00749">
    <property type="entry name" value="tRNA-synt_1c"/>
    <property type="match status" value="1"/>
</dbReference>
<dbReference type="Pfam" id="PF03950">
    <property type="entry name" value="tRNA-synt_1c_C"/>
    <property type="match status" value="1"/>
</dbReference>
<dbReference type="Pfam" id="PF20974">
    <property type="entry name" value="tRNA-synt_1c_C2"/>
    <property type="match status" value="1"/>
</dbReference>
<dbReference type="PRINTS" id="PR00987">
    <property type="entry name" value="TRNASYNTHGLU"/>
</dbReference>
<dbReference type="SUPFAM" id="SSF52374">
    <property type="entry name" value="Nucleotidylyl transferase"/>
    <property type="match status" value="1"/>
</dbReference>
<dbReference type="SUPFAM" id="SSF50715">
    <property type="entry name" value="Ribosomal protein L25-like"/>
    <property type="match status" value="1"/>
</dbReference>
<dbReference type="PROSITE" id="PS00178">
    <property type="entry name" value="AA_TRNA_LIGASE_I"/>
    <property type="match status" value="1"/>
</dbReference>
<name>SYQ_VIBCH</name>
<comment type="catalytic activity">
    <reaction evidence="1">
        <text>tRNA(Gln) + L-glutamine + ATP = L-glutaminyl-tRNA(Gln) + AMP + diphosphate</text>
        <dbReference type="Rhea" id="RHEA:20121"/>
        <dbReference type="Rhea" id="RHEA-COMP:9662"/>
        <dbReference type="Rhea" id="RHEA-COMP:9681"/>
        <dbReference type="ChEBI" id="CHEBI:30616"/>
        <dbReference type="ChEBI" id="CHEBI:33019"/>
        <dbReference type="ChEBI" id="CHEBI:58359"/>
        <dbReference type="ChEBI" id="CHEBI:78442"/>
        <dbReference type="ChEBI" id="CHEBI:78521"/>
        <dbReference type="ChEBI" id="CHEBI:456215"/>
        <dbReference type="EC" id="6.1.1.18"/>
    </reaction>
</comment>
<comment type="subunit">
    <text evidence="1">Monomer.</text>
</comment>
<comment type="subcellular location">
    <subcellularLocation>
        <location evidence="1">Cytoplasm</location>
    </subcellularLocation>
</comment>
<comment type="similarity">
    <text evidence="1 2">Belongs to the class-I aminoacyl-tRNA synthetase family.</text>
</comment>
<organism>
    <name type="scientific">Vibrio cholerae serotype O1 (strain ATCC 39315 / El Tor Inaba N16961)</name>
    <dbReference type="NCBI Taxonomy" id="243277"/>
    <lineage>
        <taxon>Bacteria</taxon>
        <taxon>Pseudomonadati</taxon>
        <taxon>Pseudomonadota</taxon>
        <taxon>Gammaproteobacteria</taxon>
        <taxon>Vibrionales</taxon>
        <taxon>Vibrionaceae</taxon>
        <taxon>Vibrio</taxon>
    </lineage>
</organism>
<sequence>MSEAEARPSNFIRQIIDKDLADGKHTTVHTRFPPEPNGYLHIGHAKSICLNFGIAQDYQGQCNLRFDDTNPEKENLEYVESIKKDVTWLGFDWSGEVCYSSDYFDKLYEYAIELIQKGLAYVDELTPEQIREYRGTLTEPGKHSPYRDRSVEENLALFEKMRAGEFAEGQACLRAKIDMASSFIVMRDPVLYRVRFAEHHQTGDKWCIYPMYDFTHCISDALEGITHSICTLEFQDNRRLYDWVLDNITIPCHPRQYEFSRLNLEYTVMSKRKLNQLVTEKLVTGWDDPRMPTISGLRRRGFTPSAIREFCKRIGVTKQENMIEYSALESCIRDDLNENAPRAMAVLDPVKLVIENFAAGTVETLTLANHPNKPEMGDREVPFTRELWIEREDFREEANKKYKRLVLGKEVRLRGAYVIKAERIEKDEQGNITTIFCSYDPETLGKNPADGRKVKGVIHWVSAEKGVPAEFRLYERLFTVPNPGAADNFAETINPESLVKVQGYVEPSLVEAKPEFGYQFERMGYFCADNKDSSPQALVFNRTVGLRDSFAKIDEE</sequence>
<evidence type="ECO:0000255" key="1">
    <source>
        <dbReference type="HAMAP-Rule" id="MF_00126"/>
    </source>
</evidence>
<evidence type="ECO:0000305" key="2"/>
<gene>
    <name evidence="1" type="primary">glnS</name>
    <name type="ordered locus">VC_0997</name>
</gene>
<accession>Q9KTA6</accession>
<keyword id="KW-0030">Aminoacyl-tRNA synthetase</keyword>
<keyword id="KW-0067">ATP-binding</keyword>
<keyword id="KW-0963">Cytoplasm</keyword>
<keyword id="KW-0436">Ligase</keyword>
<keyword id="KW-0547">Nucleotide-binding</keyword>
<keyword id="KW-0648">Protein biosynthesis</keyword>
<keyword id="KW-1185">Reference proteome</keyword>